<reference key="1">
    <citation type="journal article" date="2000" name="Science">
        <title>The genome sequence of Drosophila melanogaster.</title>
        <authorList>
            <person name="Adams M.D."/>
            <person name="Celniker S.E."/>
            <person name="Holt R.A."/>
            <person name="Evans C.A."/>
            <person name="Gocayne J.D."/>
            <person name="Amanatides P.G."/>
            <person name="Scherer S.E."/>
            <person name="Li P.W."/>
            <person name="Hoskins R.A."/>
            <person name="Galle R.F."/>
            <person name="George R.A."/>
            <person name="Lewis S.E."/>
            <person name="Richards S."/>
            <person name="Ashburner M."/>
            <person name="Henderson S.N."/>
            <person name="Sutton G.G."/>
            <person name="Wortman J.R."/>
            <person name="Yandell M.D."/>
            <person name="Zhang Q."/>
            <person name="Chen L.X."/>
            <person name="Brandon R.C."/>
            <person name="Rogers Y.-H.C."/>
            <person name="Blazej R.G."/>
            <person name="Champe M."/>
            <person name="Pfeiffer B.D."/>
            <person name="Wan K.H."/>
            <person name="Doyle C."/>
            <person name="Baxter E.G."/>
            <person name="Helt G."/>
            <person name="Nelson C.R."/>
            <person name="Miklos G.L.G."/>
            <person name="Abril J.F."/>
            <person name="Agbayani A."/>
            <person name="An H.-J."/>
            <person name="Andrews-Pfannkoch C."/>
            <person name="Baldwin D."/>
            <person name="Ballew R.M."/>
            <person name="Basu A."/>
            <person name="Baxendale J."/>
            <person name="Bayraktaroglu L."/>
            <person name="Beasley E.M."/>
            <person name="Beeson K.Y."/>
            <person name="Benos P.V."/>
            <person name="Berman B.P."/>
            <person name="Bhandari D."/>
            <person name="Bolshakov S."/>
            <person name="Borkova D."/>
            <person name="Botchan M.R."/>
            <person name="Bouck J."/>
            <person name="Brokstein P."/>
            <person name="Brottier P."/>
            <person name="Burtis K.C."/>
            <person name="Busam D.A."/>
            <person name="Butler H."/>
            <person name="Cadieu E."/>
            <person name="Center A."/>
            <person name="Chandra I."/>
            <person name="Cherry J.M."/>
            <person name="Cawley S."/>
            <person name="Dahlke C."/>
            <person name="Davenport L.B."/>
            <person name="Davies P."/>
            <person name="de Pablos B."/>
            <person name="Delcher A."/>
            <person name="Deng Z."/>
            <person name="Mays A.D."/>
            <person name="Dew I."/>
            <person name="Dietz S.M."/>
            <person name="Dodson K."/>
            <person name="Doup L.E."/>
            <person name="Downes M."/>
            <person name="Dugan-Rocha S."/>
            <person name="Dunkov B.C."/>
            <person name="Dunn P."/>
            <person name="Durbin K.J."/>
            <person name="Evangelista C.C."/>
            <person name="Ferraz C."/>
            <person name="Ferriera S."/>
            <person name="Fleischmann W."/>
            <person name="Fosler C."/>
            <person name="Gabrielian A.E."/>
            <person name="Garg N.S."/>
            <person name="Gelbart W.M."/>
            <person name="Glasser K."/>
            <person name="Glodek A."/>
            <person name="Gong F."/>
            <person name="Gorrell J.H."/>
            <person name="Gu Z."/>
            <person name="Guan P."/>
            <person name="Harris M."/>
            <person name="Harris N.L."/>
            <person name="Harvey D.A."/>
            <person name="Heiman T.J."/>
            <person name="Hernandez J.R."/>
            <person name="Houck J."/>
            <person name="Hostin D."/>
            <person name="Houston K.A."/>
            <person name="Howland T.J."/>
            <person name="Wei M.-H."/>
            <person name="Ibegwam C."/>
            <person name="Jalali M."/>
            <person name="Kalush F."/>
            <person name="Karpen G.H."/>
            <person name="Ke Z."/>
            <person name="Kennison J.A."/>
            <person name="Ketchum K.A."/>
            <person name="Kimmel B.E."/>
            <person name="Kodira C.D."/>
            <person name="Kraft C.L."/>
            <person name="Kravitz S."/>
            <person name="Kulp D."/>
            <person name="Lai Z."/>
            <person name="Lasko P."/>
            <person name="Lei Y."/>
            <person name="Levitsky A.A."/>
            <person name="Li J.H."/>
            <person name="Li Z."/>
            <person name="Liang Y."/>
            <person name="Lin X."/>
            <person name="Liu X."/>
            <person name="Mattei B."/>
            <person name="McIntosh T.C."/>
            <person name="McLeod M.P."/>
            <person name="McPherson D."/>
            <person name="Merkulov G."/>
            <person name="Milshina N.V."/>
            <person name="Mobarry C."/>
            <person name="Morris J."/>
            <person name="Moshrefi A."/>
            <person name="Mount S.M."/>
            <person name="Moy M."/>
            <person name="Murphy B."/>
            <person name="Murphy L."/>
            <person name="Muzny D.M."/>
            <person name="Nelson D.L."/>
            <person name="Nelson D.R."/>
            <person name="Nelson K.A."/>
            <person name="Nixon K."/>
            <person name="Nusskern D.R."/>
            <person name="Pacleb J.M."/>
            <person name="Palazzolo M."/>
            <person name="Pittman G.S."/>
            <person name="Pan S."/>
            <person name="Pollard J."/>
            <person name="Puri V."/>
            <person name="Reese M.G."/>
            <person name="Reinert K."/>
            <person name="Remington K."/>
            <person name="Saunders R.D.C."/>
            <person name="Scheeler F."/>
            <person name="Shen H."/>
            <person name="Shue B.C."/>
            <person name="Siden-Kiamos I."/>
            <person name="Simpson M."/>
            <person name="Skupski M.P."/>
            <person name="Smith T.J."/>
            <person name="Spier E."/>
            <person name="Spradling A.C."/>
            <person name="Stapleton M."/>
            <person name="Strong R."/>
            <person name="Sun E."/>
            <person name="Svirskas R."/>
            <person name="Tector C."/>
            <person name="Turner R."/>
            <person name="Venter E."/>
            <person name="Wang A.H."/>
            <person name="Wang X."/>
            <person name="Wang Z.-Y."/>
            <person name="Wassarman D.A."/>
            <person name="Weinstock G.M."/>
            <person name="Weissenbach J."/>
            <person name="Williams S.M."/>
            <person name="Woodage T."/>
            <person name="Worley K.C."/>
            <person name="Wu D."/>
            <person name="Yang S."/>
            <person name="Yao Q.A."/>
            <person name="Ye J."/>
            <person name="Yeh R.-F."/>
            <person name="Zaveri J.S."/>
            <person name="Zhan M."/>
            <person name="Zhang G."/>
            <person name="Zhao Q."/>
            <person name="Zheng L."/>
            <person name="Zheng X.H."/>
            <person name="Zhong F.N."/>
            <person name="Zhong W."/>
            <person name="Zhou X."/>
            <person name="Zhu S.C."/>
            <person name="Zhu X."/>
            <person name="Smith H.O."/>
            <person name="Gibbs R.A."/>
            <person name="Myers E.W."/>
            <person name="Rubin G.M."/>
            <person name="Venter J.C."/>
        </authorList>
    </citation>
    <scope>NUCLEOTIDE SEQUENCE [LARGE SCALE GENOMIC DNA]</scope>
    <source>
        <strain>Berkeley</strain>
    </source>
</reference>
<reference key="2">
    <citation type="journal article" date="2002" name="Genome Biol.">
        <title>Annotation of the Drosophila melanogaster euchromatic genome: a systematic review.</title>
        <authorList>
            <person name="Misra S."/>
            <person name="Crosby M.A."/>
            <person name="Mungall C.J."/>
            <person name="Matthews B.B."/>
            <person name="Campbell K.S."/>
            <person name="Hradecky P."/>
            <person name="Huang Y."/>
            <person name="Kaminker J.S."/>
            <person name="Millburn G.H."/>
            <person name="Prochnik S.E."/>
            <person name="Smith C.D."/>
            <person name="Tupy J.L."/>
            <person name="Whitfield E.J."/>
            <person name="Bayraktaroglu L."/>
            <person name="Berman B.P."/>
            <person name="Bettencourt B.R."/>
            <person name="Celniker S.E."/>
            <person name="de Grey A.D.N.J."/>
            <person name="Drysdale R.A."/>
            <person name="Harris N.L."/>
            <person name="Richter J."/>
            <person name="Russo S."/>
            <person name="Schroeder A.J."/>
            <person name="Shu S.Q."/>
            <person name="Stapleton M."/>
            <person name="Yamada C."/>
            <person name="Ashburner M."/>
            <person name="Gelbart W.M."/>
            <person name="Rubin G.M."/>
            <person name="Lewis S.E."/>
        </authorList>
    </citation>
    <scope>GENOME REANNOTATION</scope>
    <source>
        <strain>Berkeley</strain>
    </source>
</reference>
<reference key="3">
    <citation type="journal article" date="2002" name="Genome Biol.">
        <title>A Drosophila full-length cDNA resource.</title>
        <authorList>
            <person name="Stapleton M."/>
            <person name="Carlson J.W."/>
            <person name="Brokstein P."/>
            <person name="Yu C."/>
            <person name="Champe M."/>
            <person name="George R.A."/>
            <person name="Guarin H."/>
            <person name="Kronmiller B."/>
            <person name="Pacleb J.M."/>
            <person name="Park S."/>
            <person name="Wan K.H."/>
            <person name="Rubin G.M."/>
            <person name="Celniker S.E."/>
        </authorList>
    </citation>
    <scope>NUCLEOTIDE SEQUENCE [LARGE SCALE MRNA]</scope>
    <source>
        <strain>Berkeley</strain>
        <tissue>Embryo</tissue>
    </source>
</reference>
<reference key="4">
    <citation type="journal article" date="2008" name="J. Proteome Res.">
        <title>Phosphoproteome analysis of Drosophila melanogaster embryos.</title>
        <authorList>
            <person name="Zhai B."/>
            <person name="Villen J."/>
            <person name="Beausoleil S.A."/>
            <person name="Mintseris J."/>
            <person name="Gygi S.P."/>
        </authorList>
    </citation>
    <scope>PHOSPHORYLATION [LARGE SCALE ANALYSIS] AT THR-463</scope>
    <scope>IDENTIFICATION BY MASS SPECTROMETRY</scope>
    <source>
        <tissue>Embryo</tissue>
    </source>
</reference>
<accession>Q9VNX8</accession>
<dbReference type="EMBL" id="AE014296">
    <property type="protein sequence ID" value="AAF51786.1"/>
    <property type="molecule type" value="Genomic_DNA"/>
</dbReference>
<dbReference type="EMBL" id="AY051717">
    <property type="protein sequence ID" value="AAK93141.1"/>
    <property type="molecule type" value="mRNA"/>
</dbReference>
<dbReference type="RefSeq" id="NP_001137996.2">
    <property type="nucleotide sequence ID" value="NM_001144524.3"/>
</dbReference>
<dbReference type="RefSeq" id="NP_649365.1">
    <property type="nucleotide sequence ID" value="NM_141108.2"/>
</dbReference>
<dbReference type="SMR" id="Q9VNX8"/>
<dbReference type="BioGRID" id="65671">
    <property type="interactions" value="5"/>
</dbReference>
<dbReference type="FunCoup" id="Q9VNX8">
    <property type="interactions" value="2463"/>
</dbReference>
<dbReference type="IntAct" id="Q9VNX8">
    <property type="interactions" value="3"/>
</dbReference>
<dbReference type="STRING" id="7227.FBpp0078095"/>
<dbReference type="iPTMnet" id="Q9VNX8"/>
<dbReference type="PaxDb" id="7227-FBpp0078095"/>
<dbReference type="DNASU" id="40431"/>
<dbReference type="EnsemblMetazoa" id="FBtr0078441">
    <property type="protein sequence ID" value="FBpp0078095"/>
    <property type="gene ID" value="FBgn0037135"/>
</dbReference>
<dbReference type="EnsemblMetazoa" id="FBtr0303246">
    <property type="protein sequence ID" value="FBpp0292338"/>
    <property type="gene ID" value="FBgn0037135"/>
</dbReference>
<dbReference type="GeneID" id="40431"/>
<dbReference type="KEGG" id="dme:Dmel_CG7414"/>
<dbReference type="UCSC" id="CG7414-RA">
    <property type="organism name" value="d. melanogaster"/>
</dbReference>
<dbReference type="AGR" id="FB:FBgn0037135"/>
<dbReference type="CTD" id="83939"/>
<dbReference type="FlyBase" id="FBgn0037135">
    <property type="gene designation" value="eIF2A"/>
</dbReference>
<dbReference type="VEuPathDB" id="VectorBase:FBgn0037135"/>
<dbReference type="eggNOG" id="KOG2315">
    <property type="taxonomic scope" value="Eukaryota"/>
</dbReference>
<dbReference type="GeneTree" id="ENSGT00730000111053"/>
<dbReference type="HOGENOM" id="CLU_013809_1_0_1"/>
<dbReference type="InParanoid" id="Q9VNX8"/>
<dbReference type="OMA" id="RCCAYSP"/>
<dbReference type="OrthoDB" id="2194683at2759"/>
<dbReference type="PhylomeDB" id="Q9VNX8"/>
<dbReference type="BioGRID-ORCS" id="40431">
    <property type="hits" value="0 hits in 1 CRISPR screen"/>
</dbReference>
<dbReference type="ChiTaRS" id="CG7414">
    <property type="organism name" value="fly"/>
</dbReference>
<dbReference type="GenomeRNAi" id="40431"/>
<dbReference type="PRO" id="PR:Q9VNX8"/>
<dbReference type="Proteomes" id="UP000000803">
    <property type="component" value="Chromosome 3L"/>
</dbReference>
<dbReference type="Bgee" id="FBgn0037135">
    <property type="expression patterns" value="Expressed in capitellum (Drosophila) and 234 other cell types or tissues"/>
</dbReference>
<dbReference type="ExpressionAtlas" id="Q9VNX8">
    <property type="expression patterns" value="baseline and differential"/>
</dbReference>
<dbReference type="GO" id="GO:0005737">
    <property type="term" value="C:cytoplasm"/>
    <property type="evidence" value="ECO:0000250"/>
    <property type="project" value="FlyBase"/>
</dbReference>
<dbReference type="GO" id="GO:0022627">
    <property type="term" value="C:cytosolic small ribosomal subunit"/>
    <property type="evidence" value="ECO:0000318"/>
    <property type="project" value="GO_Central"/>
</dbReference>
<dbReference type="GO" id="GO:0003729">
    <property type="term" value="F:mRNA binding"/>
    <property type="evidence" value="ECO:0000318"/>
    <property type="project" value="GO_Central"/>
</dbReference>
<dbReference type="GO" id="GO:0043022">
    <property type="term" value="F:ribosome binding"/>
    <property type="evidence" value="ECO:0000318"/>
    <property type="project" value="GO_Central"/>
</dbReference>
<dbReference type="GO" id="GO:0003743">
    <property type="term" value="F:translation initiation factor activity"/>
    <property type="evidence" value="ECO:0000250"/>
    <property type="project" value="FlyBase"/>
</dbReference>
<dbReference type="GO" id="GO:0000049">
    <property type="term" value="F:tRNA binding"/>
    <property type="evidence" value="ECO:0000318"/>
    <property type="project" value="GO_Central"/>
</dbReference>
<dbReference type="GO" id="GO:0006417">
    <property type="term" value="P:regulation of translation"/>
    <property type="evidence" value="ECO:0000250"/>
    <property type="project" value="FlyBase"/>
</dbReference>
<dbReference type="GO" id="GO:0007291">
    <property type="term" value="P:sperm individualization"/>
    <property type="evidence" value="ECO:0000315"/>
    <property type="project" value="FlyBase"/>
</dbReference>
<dbReference type="GO" id="GO:0006413">
    <property type="term" value="P:translational initiation"/>
    <property type="evidence" value="ECO:0000304"/>
    <property type="project" value="FlyBase"/>
</dbReference>
<dbReference type="FunFam" id="2.130.10.10:FF:001250">
    <property type="entry name" value="Eukaryotic translation initiation factor 2A"/>
    <property type="match status" value="1"/>
</dbReference>
<dbReference type="Gene3D" id="2.130.10.10">
    <property type="entry name" value="YVTN repeat-like/Quinoprotein amine dehydrogenase"/>
    <property type="match status" value="1"/>
</dbReference>
<dbReference type="InterPro" id="IPR011387">
    <property type="entry name" value="TIF2A"/>
</dbReference>
<dbReference type="InterPro" id="IPR013979">
    <property type="entry name" value="TIF_beta_prop-like"/>
</dbReference>
<dbReference type="InterPro" id="IPR015943">
    <property type="entry name" value="WD40/YVTN_repeat-like_dom_sf"/>
</dbReference>
<dbReference type="PANTHER" id="PTHR13227">
    <property type="entry name" value="EUKARYOTIC TRANSLATION INITIATION FACTOR 2A"/>
    <property type="match status" value="1"/>
</dbReference>
<dbReference type="PANTHER" id="PTHR13227:SF0">
    <property type="entry name" value="EUKARYOTIC TRANSLATION INITIATION FACTOR 2A"/>
    <property type="match status" value="1"/>
</dbReference>
<dbReference type="Pfam" id="PF08662">
    <property type="entry name" value="eIF2A"/>
    <property type="match status" value="1"/>
</dbReference>
<dbReference type="PIRSF" id="PIRSF017222">
    <property type="entry name" value="eIF2A"/>
    <property type="match status" value="1"/>
</dbReference>
<dbReference type="SUPFAM" id="SSF82171">
    <property type="entry name" value="DPP6 N-terminal domain-like"/>
    <property type="match status" value="1"/>
</dbReference>
<protein>
    <recommendedName>
        <fullName evidence="6">Eukaryotic translation initiation factor 2A</fullName>
        <shortName>eIF-2A</shortName>
    </recommendedName>
</protein>
<evidence type="ECO:0000250" key="1">
    <source>
        <dbReference type="UniProtKB" id="Q9BY44"/>
    </source>
</evidence>
<evidence type="ECO:0000255" key="2"/>
<evidence type="ECO:0000256" key="3">
    <source>
        <dbReference type="SAM" id="MobiDB-lite"/>
    </source>
</evidence>
<evidence type="ECO:0000269" key="4">
    <source>
    </source>
</evidence>
<evidence type="ECO:0000305" key="5"/>
<evidence type="ECO:0000312" key="6">
    <source>
        <dbReference type="FlyBase" id="FBgn0037135"/>
    </source>
</evidence>
<name>EIF2A_DROME</name>
<keyword id="KW-0396">Initiation factor</keyword>
<keyword id="KW-0597">Phosphoprotein</keyword>
<keyword id="KW-0648">Protein biosynthesis</keyword>
<keyword id="KW-1185">Reference proteome</keyword>
<keyword id="KW-0677">Repeat</keyword>
<keyword id="KW-0810">Translation regulation</keyword>
<keyword id="KW-0853">WD repeat</keyword>
<feature type="chain" id="PRO_0000286082" description="Eukaryotic translation initiation factor 2A">
    <location>
        <begin position="1"/>
        <end position="638"/>
    </location>
</feature>
<feature type="repeat" description="WD 1" evidence="2">
    <location>
        <begin position="287"/>
        <end position="329"/>
    </location>
</feature>
<feature type="repeat" description="WD 2" evidence="2">
    <location>
        <begin position="331"/>
        <end position="370"/>
    </location>
</feature>
<feature type="region of interest" description="Disordered" evidence="3">
    <location>
        <begin position="441"/>
        <end position="593"/>
    </location>
</feature>
<feature type="compositionally biased region" description="Basic and acidic residues" evidence="3">
    <location>
        <begin position="441"/>
        <end position="450"/>
    </location>
</feature>
<feature type="compositionally biased region" description="Low complexity" evidence="3">
    <location>
        <begin position="492"/>
        <end position="501"/>
    </location>
</feature>
<feature type="compositionally biased region" description="Basic and acidic residues" evidence="3">
    <location>
        <begin position="583"/>
        <end position="593"/>
    </location>
</feature>
<feature type="modified residue" description="Phosphothreonine" evidence="4">
    <location>
        <position position="463"/>
    </location>
</feature>
<proteinExistence type="evidence at protein level"/>
<gene>
    <name evidence="6" type="primary">eIF2A</name>
    <name evidence="6" type="ORF">CG7414</name>
</gene>
<comment type="function">
    <text evidence="1">Functions in the early steps of protein synthesis of a small number of specific mRNAs. Acts by directing the binding of methionyl-tRNAi to 40S ribosomal subunits. In contrast to the eIF-2 complex, it binds methionyl-tRNAi to 40S subunits in a codon-dependent manner, whereas the eIF-2 complex binds methionyl-tRNAi to 40S subunits in a GTP-dependent manner.</text>
</comment>
<comment type="similarity">
    <text evidence="5">Belongs to the WD repeat EIF2A family.</text>
</comment>
<organism>
    <name type="scientific">Drosophila melanogaster</name>
    <name type="common">Fruit fly</name>
    <dbReference type="NCBI Taxonomy" id="7227"/>
    <lineage>
        <taxon>Eukaryota</taxon>
        <taxon>Metazoa</taxon>
        <taxon>Ecdysozoa</taxon>
        <taxon>Arthropoda</taxon>
        <taxon>Hexapoda</taxon>
        <taxon>Insecta</taxon>
        <taxon>Pterygota</taxon>
        <taxon>Neoptera</taxon>
        <taxon>Endopterygota</taxon>
        <taxon>Diptera</taxon>
        <taxon>Brachycera</taxon>
        <taxon>Muscomorpha</taxon>
        <taxon>Ephydroidea</taxon>
        <taxon>Drosophilidae</taxon>
        <taxon>Drosophila</taxon>
        <taxon>Sophophora</taxon>
    </lineage>
</organism>
<sequence>MAAAADLVVPTLAIRSSVAVELWSSAGSKQPFEHKPHLPREETKSSRSICFSSNGRYFAYSNGQEVKVLQASRDSAASWPVICVLPRPKAFYLQFSPRGSYLCTWEHYAITKDRPEGSPNLLVYEVATGVEVFAIVQKNQADWQPSWSADESIFALVVGGEALFYDLGEGAEKGFATTSRKIGGSRGGMLSLGPGNCPPFLAFYTPGAKGAPSMCKLYKYPALGQNQTVACKSFFQADRVEMLWNKRGSGLLLLTSTEVDKSGASYYGNQAVHFMATKGDTCSVPLSKEGPVHCVKWSPKATEFVVVYGFMPSKAALYNLKCDVVFDFGEGPRNCAYFNPFGNLIALAGFGNLPGAVEVWDVSKREKLANLKCADTTVFEWHPNGEWFVTATTAPRLRISNGFKVYHYSGALLHETMWPQGQELLGIEWQQFADKTFSEPKITKAKHEGIKSSQPEASKKAYTPPHLRLLKEGKNPEKYLPQPSIPGLAPTAAAGGVNGNKRNNKNKQRSARKDVNVVNGGDADSAPTEVVDQAAPVARQSPVFVAAEERKPQHTPRQKYQPDNAADQPPNSYGQGHPNGQHISDKERKIRSVAKKLSDIKKLKVRRSQGENLELNQLNKIKMEAQYLDELKALKQSA</sequence>